<name>Y1533_PSEAE</name>
<feature type="chain" id="PRO_0000170423" description="Nucleoid-associated protein PA1533">
    <location>
        <begin position="1"/>
        <end position="108"/>
    </location>
</feature>
<feature type="region of interest" description="Disordered" evidence="2">
    <location>
        <begin position="1"/>
        <end position="25"/>
    </location>
</feature>
<feature type="region of interest" description="Disordered" evidence="2">
    <location>
        <begin position="87"/>
        <end position="108"/>
    </location>
</feature>
<feature type="compositionally biased region" description="Polar residues" evidence="2">
    <location>
        <begin position="87"/>
        <end position="98"/>
    </location>
</feature>
<evidence type="ECO:0000255" key="1">
    <source>
        <dbReference type="HAMAP-Rule" id="MF_00274"/>
    </source>
</evidence>
<evidence type="ECO:0000256" key="2">
    <source>
        <dbReference type="SAM" id="MobiDB-lite"/>
    </source>
</evidence>
<gene>
    <name type="ordered locus">PA1533</name>
</gene>
<protein>
    <recommendedName>
        <fullName evidence="1">Nucleoid-associated protein PA1533</fullName>
    </recommendedName>
</protein>
<dbReference type="EMBL" id="AE004091">
    <property type="protein sequence ID" value="AAG04922.1"/>
    <property type="molecule type" value="Genomic_DNA"/>
</dbReference>
<dbReference type="PIR" id="B83455">
    <property type="entry name" value="B83455"/>
</dbReference>
<dbReference type="RefSeq" id="NP_250224.1">
    <property type="nucleotide sequence ID" value="NC_002516.2"/>
</dbReference>
<dbReference type="RefSeq" id="WP_003087236.1">
    <property type="nucleotide sequence ID" value="NZ_QZGE01000032.1"/>
</dbReference>
<dbReference type="SMR" id="Q9I3I0"/>
<dbReference type="FunCoup" id="Q9I3I0">
    <property type="interactions" value="486"/>
</dbReference>
<dbReference type="STRING" id="208964.PA1533"/>
<dbReference type="PaxDb" id="208964-PA1533"/>
<dbReference type="DNASU" id="882998"/>
<dbReference type="GeneID" id="882998"/>
<dbReference type="KEGG" id="pae:PA1533"/>
<dbReference type="PATRIC" id="fig|208964.12.peg.1586"/>
<dbReference type="PseudoCAP" id="PA1533"/>
<dbReference type="HOGENOM" id="CLU_140930_0_0_6"/>
<dbReference type="InParanoid" id="Q9I3I0"/>
<dbReference type="OrthoDB" id="9808738at2"/>
<dbReference type="PhylomeDB" id="Q9I3I0"/>
<dbReference type="BioCyc" id="PAER208964:G1FZ6-1561-MONOMER"/>
<dbReference type="Proteomes" id="UP000002438">
    <property type="component" value="Chromosome"/>
</dbReference>
<dbReference type="GO" id="GO:0043590">
    <property type="term" value="C:bacterial nucleoid"/>
    <property type="evidence" value="ECO:0007669"/>
    <property type="project" value="UniProtKB-UniRule"/>
</dbReference>
<dbReference type="GO" id="GO:0005829">
    <property type="term" value="C:cytosol"/>
    <property type="evidence" value="ECO:0000318"/>
    <property type="project" value="GO_Central"/>
</dbReference>
<dbReference type="GO" id="GO:0003677">
    <property type="term" value="F:DNA binding"/>
    <property type="evidence" value="ECO:0000318"/>
    <property type="project" value="GO_Central"/>
</dbReference>
<dbReference type="FunFam" id="3.30.1310.10:FF:000001">
    <property type="entry name" value="Nucleoid-associated protein YbaB"/>
    <property type="match status" value="1"/>
</dbReference>
<dbReference type="Gene3D" id="3.30.1310.10">
    <property type="entry name" value="Nucleoid-associated protein YbaB-like domain"/>
    <property type="match status" value="1"/>
</dbReference>
<dbReference type="HAMAP" id="MF_00274">
    <property type="entry name" value="DNA_YbaB_EbfC"/>
    <property type="match status" value="1"/>
</dbReference>
<dbReference type="InterPro" id="IPR036894">
    <property type="entry name" value="YbaB-like_sf"/>
</dbReference>
<dbReference type="InterPro" id="IPR004401">
    <property type="entry name" value="YbaB/EbfC"/>
</dbReference>
<dbReference type="NCBIfam" id="TIGR00103">
    <property type="entry name" value="DNA_YbaB_EbfC"/>
    <property type="match status" value="1"/>
</dbReference>
<dbReference type="PANTHER" id="PTHR33449">
    <property type="entry name" value="NUCLEOID-ASSOCIATED PROTEIN YBAB"/>
    <property type="match status" value="1"/>
</dbReference>
<dbReference type="PANTHER" id="PTHR33449:SF1">
    <property type="entry name" value="NUCLEOID-ASSOCIATED PROTEIN YBAB"/>
    <property type="match status" value="1"/>
</dbReference>
<dbReference type="Pfam" id="PF02575">
    <property type="entry name" value="YbaB_DNA_bd"/>
    <property type="match status" value="1"/>
</dbReference>
<dbReference type="PIRSF" id="PIRSF004555">
    <property type="entry name" value="UCP004555"/>
    <property type="match status" value="1"/>
</dbReference>
<dbReference type="SUPFAM" id="SSF82607">
    <property type="entry name" value="YbaB-like"/>
    <property type="match status" value="1"/>
</dbReference>
<reference key="1">
    <citation type="journal article" date="2000" name="Nature">
        <title>Complete genome sequence of Pseudomonas aeruginosa PAO1, an opportunistic pathogen.</title>
        <authorList>
            <person name="Stover C.K."/>
            <person name="Pham X.-Q.T."/>
            <person name="Erwin A.L."/>
            <person name="Mizoguchi S.D."/>
            <person name="Warrener P."/>
            <person name="Hickey M.J."/>
            <person name="Brinkman F.S.L."/>
            <person name="Hufnagle W.O."/>
            <person name="Kowalik D.J."/>
            <person name="Lagrou M."/>
            <person name="Garber R.L."/>
            <person name="Goltry L."/>
            <person name="Tolentino E."/>
            <person name="Westbrock-Wadman S."/>
            <person name="Yuan Y."/>
            <person name="Brody L.L."/>
            <person name="Coulter S.N."/>
            <person name="Folger K.R."/>
            <person name="Kas A."/>
            <person name="Larbig K."/>
            <person name="Lim R.M."/>
            <person name="Smith K.A."/>
            <person name="Spencer D.H."/>
            <person name="Wong G.K.-S."/>
            <person name="Wu Z."/>
            <person name="Paulsen I.T."/>
            <person name="Reizer J."/>
            <person name="Saier M.H. Jr."/>
            <person name="Hancock R.E.W."/>
            <person name="Lory S."/>
            <person name="Olson M.V."/>
        </authorList>
    </citation>
    <scope>NUCLEOTIDE SEQUENCE [LARGE SCALE GENOMIC DNA]</scope>
    <source>
        <strain>ATCC 15692 / DSM 22644 / CIP 104116 / JCM 14847 / LMG 12228 / 1C / PRS 101 / PAO1</strain>
    </source>
</reference>
<keyword id="KW-0963">Cytoplasm</keyword>
<keyword id="KW-0238">DNA-binding</keyword>
<keyword id="KW-1185">Reference proteome</keyword>
<sequence length="108" mass="11877">MMKGGMAGLMKQAQQMQEKMQKMQEELANAEVTGQSGAGLVSVVMTGRHDVKRVSLDDSLMQEDKEILEDLIAAAVNDAVRKIEQNNQEKMSGFTSGMQLPPGFKMPF</sequence>
<proteinExistence type="inferred from homology"/>
<accession>Q9I3I0</accession>
<comment type="function">
    <text evidence="1">Binds to DNA and alters its conformation. May be involved in regulation of gene expression, nucleoid organization and DNA protection.</text>
</comment>
<comment type="subunit">
    <text evidence="1">Homodimer.</text>
</comment>
<comment type="subcellular location">
    <subcellularLocation>
        <location evidence="1">Cytoplasm</location>
        <location evidence="1">Nucleoid</location>
    </subcellularLocation>
</comment>
<comment type="similarity">
    <text evidence="1">Belongs to the YbaB/EbfC family.</text>
</comment>
<organism>
    <name type="scientific">Pseudomonas aeruginosa (strain ATCC 15692 / DSM 22644 / CIP 104116 / JCM 14847 / LMG 12228 / 1C / PRS 101 / PAO1)</name>
    <dbReference type="NCBI Taxonomy" id="208964"/>
    <lineage>
        <taxon>Bacteria</taxon>
        <taxon>Pseudomonadati</taxon>
        <taxon>Pseudomonadota</taxon>
        <taxon>Gammaproteobacteria</taxon>
        <taxon>Pseudomonadales</taxon>
        <taxon>Pseudomonadaceae</taxon>
        <taxon>Pseudomonas</taxon>
    </lineage>
</organism>